<proteinExistence type="inferred from homology"/>
<sequence length="373" mass="42291">MLIIIRPSGEIALKSPRSRRNFEHTLANNIRSVIKEGKIWRSQGVLFLEVNDNNKNIEELSKVFGIASFSPVMSIKSYNNNLEDIINKAKEVFAEIVKGKIFSVRAKRIGSHNFTSLDVQRKVGEALYPFSRGVNLENPEVEVFIEIRNDVAYFYYKIIKGPRGLPVGVAGKTVVLFSGGIDSPVATWMMMKRGSIPVILNFNLGGSVHRKFVLEELSVLRKWSGGHKLKLFIVNGTDVLIKLSQIEKRNRVVMLKRVMYKVAERLCDKANAKSITTGESLSQVSSQTMTNLYVTEYGIKYPIFRPLIGFDKEEIVELARKIGTYEYSIKLPEYCAISTKARTSVELDEVLKDEENLNIDYEKVLENSEVIEI</sequence>
<accession>C3NG28</accession>
<dbReference type="EC" id="2.8.1.4" evidence="1"/>
<dbReference type="EMBL" id="CP001404">
    <property type="protein sequence ID" value="ACP48146.1"/>
    <property type="molecule type" value="Genomic_DNA"/>
</dbReference>
<dbReference type="RefSeq" id="WP_012716393.1">
    <property type="nucleotide sequence ID" value="NC_012623.1"/>
</dbReference>
<dbReference type="SMR" id="C3NG28"/>
<dbReference type="GeneID" id="7809651"/>
<dbReference type="KEGG" id="sin:YN1551_1039"/>
<dbReference type="HOGENOM" id="CLU_037952_4_0_2"/>
<dbReference type="UniPathway" id="UPA00060"/>
<dbReference type="Proteomes" id="UP000006818">
    <property type="component" value="Chromosome"/>
</dbReference>
<dbReference type="GO" id="GO:0005829">
    <property type="term" value="C:cytosol"/>
    <property type="evidence" value="ECO:0007669"/>
    <property type="project" value="TreeGrafter"/>
</dbReference>
<dbReference type="GO" id="GO:0005524">
    <property type="term" value="F:ATP binding"/>
    <property type="evidence" value="ECO:0007669"/>
    <property type="project" value="UniProtKB-UniRule"/>
</dbReference>
<dbReference type="GO" id="GO:0004810">
    <property type="term" value="F:CCA tRNA nucleotidyltransferase activity"/>
    <property type="evidence" value="ECO:0007669"/>
    <property type="project" value="InterPro"/>
</dbReference>
<dbReference type="GO" id="GO:0000049">
    <property type="term" value="F:tRNA binding"/>
    <property type="evidence" value="ECO:0007669"/>
    <property type="project" value="UniProtKB-UniRule"/>
</dbReference>
<dbReference type="GO" id="GO:0140741">
    <property type="term" value="F:tRNA-uracil-4 sulfurtransferase activity"/>
    <property type="evidence" value="ECO:0007669"/>
    <property type="project" value="UniProtKB-EC"/>
</dbReference>
<dbReference type="GO" id="GO:0009228">
    <property type="term" value="P:thiamine biosynthetic process"/>
    <property type="evidence" value="ECO:0007669"/>
    <property type="project" value="UniProtKB-KW"/>
</dbReference>
<dbReference type="GO" id="GO:0009229">
    <property type="term" value="P:thiamine diphosphate biosynthetic process"/>
    <property type="evidence" value="ECO:0007669"/>
    <property type="project" value="UniProtKB-UniRule"/>
</dbReference>
<dbReference type="GO" id="GO:0052837">
    <property type="term" value="P:thiazole biosynthetic process"/>
    <property type="evidence" value="ECO:0007669"/>
    <property type="project" value="TreeGrafter"/>
</dbReference>
<dbReference type="GO" id="GO:0002937">
    <property type="term" value="P:tRNA 4-thiouridine biosynthesis"/>
    <property type="evidence" value="ECO:0007669"/>
    <property type="project" value="TreeGrafter"/>
</dbReference>
<dbReference type="CDD" id="cd01712">
    <property type="entry name" value="PPase_ThiI"/>
    <property type="match status" value="1"/>
</dbReference>
<dbReference type="CDD" id="cd11716">
    <property type="entry name" value="THUMP_ThiI"/>
    <property type="match status" value="1"/>
</dbReference>
<dbReference type="Gene3D" id="3.30.2130.30">
    <property type="match status" value="1"/>
</dbReference>
<dbReference type="Gene3D" id="3.40.50.620">
    <property type="entry name" value="HUPs"/>
    <property type="match status" value="1"/>
</dbReference>
<dbReference type="HAMAP" id="MF_00021">
    <property type="entry name" value="ThiI"/>
    <property type="match status" value="1"/>
</dbReference>
<dbReference type="InterPro" id="IPR014729">
    <property type="entry name" value="Rossmann-like_a/b/a_fold"/>
</dbReference>
<dbReference type="InterPro" id="IPR020536">
    <property type="entry name" value="ThiI_AANH"/>
</dbReference>
<dbReference type="InterPro" id="IPR054173">
    <property type="entry name" value="ThiI_fer"/>
</dbReference>
<dbReference type="InterPro" id="IPR049961">
    <property type="entry name" value="ThiI_N"/>
</dbReference>
<dbReference type="InterPro" id="IPR004114">
    <property type="entry name" value="THUMP_dom"/>
</dbReference>
<dbReference type="InterPro" id="IPR049962">
    <property type="entry name" value="THUMP_ThiI"/>
</dbReference>
<dbReference type="InterPro" id="IPR003720">
    <property type="entry name" value="tRNA_STrfase"/>
</dbReference>
<dbReference type="InterPro" id="IPR050102">
    <property type="entry name" value="tRNA_sulfurtransferase_ThiI"/>
</dbReference>
<dbReference type="NCBIfam" id="TIGR00342">
    <property type="entry name" value="tRNA uracil 4-sulfurtransferase ThiI"/>
    <property type="match status" value="1"/>
</dbReference>
<dbReference type="PANTHER" id="PTHR43209">
    <property type="entry name" value="TRNA SULFURTRANSFERASE"/>
    <property type="match status" value="1"/>
</dbReference>
<dbReference type="PANTHER" id="PTHR43209:SF1">
    <property type="entry name" value="TRNA SULFURTRANSFERASE"/>
    <property type="match status" value="1"/>
</dbReference>
<dbReference type="Pfam" id="PF02568">
    <property type="entry name" value="ThiI"/>
    <property type="match status" value="1"/>
</dbReference>
<dbReference type="Pfam" id="PF22025">
    <property type="entry name" value="ThiI_fer"/>
    <property type="match status" value="1"/>
</dbReference>
<dbReference type="Pfam" id="PF02926">
    <property type="entry name" value="THUMP"/>
    <property type="match status" value="1"/>
</dbReference>
<dbReference type="SMART" id="SM00981">
    <property type="entry name" value="THUMP"/>
    <property type="match status" value="1"/>
</dbReference>
<dbReference type="SUPFAM" id="SSF52402">
    <property type="entry name" value="Adenine nucleotide alpha hydrolases-like"/>
    <property type="match status" value="1"/>
</dbReference>
<dbReference type="SUPFAM" id="SSF143437">
    <property type="entry name" value="THUMP domain-like"/>
    <property type="match status" value="1"/>
</dbReference>
<dbReference type="PROSITE" id="PS51165">
    <property type="entry name" value="THUMP"/>
    <property type="match status" value="1"/>
</dbReference>
<name>THII_SACI1</name>
<feature type="chain" id="PRO_1000201924" description="Probable tRNA sulfurtransferase">
    <location>
        <begin position="1"/>
        <end position="373"/>
    </location>
</feature>
<feature type="domain" description="THUMP" evidence="1">
    <location>
        <begin position="54"/>
        <end position="158"/>
    </location>
</feature>
<feature type="binding site" evidence="1">
    <location>
        <begin position="176"/>
        <end position="177"/>
    </location>
    <ligand>
        <name>ATP</name>
        <dbReference type="ChEBI" id="CHEBI:30616"/>
    </ligand>
</feature>
<feature type="binding site" evidence="1">
    <location>
        <begin position="201"/>
        <end position="202"/>
    </location>
    <ligand>
        <name>ATP</name>
        <dbReference type="ChEBI" id="CHEBI:30616"/>
    </ligand>
</feature>
<feature type="binding site" evidence="1">
    <location>
        <position position="256"/>
    </location>
    <ligand>
        <name>ATP</name>
        <dbReference type="ChEBI" id="CHEBI:30616"/>
    </ligand>
</feature>
<feature type="binding site" evidence="1">
    <location>
        <position position="278"/>
    </location>
    <ligand>
        <name>ATP</name>
        <dbReference type="ChEBI" id="CHEBI:30616"/>
    </ligand>
</feature>
<feature type="binding site" evidence="1">
    <location>
        <position position="287"/>
    </location>
    <ligand>
        <name>ATP</name>
        <dbReference type="ChEBI" id="CHEBI:30616"/>
    </ligand>
</feature>
<organism>
    <name type="scientific">Saccharolobus islandicus (strain Y.N.15.51 / Yellowstone #2)</name>
    <name type="common">Sulfolobus islandicus</name>
    <dbReference type="NCBI Taxonomy" id="419942"/>
    <lineage>
        <taxon>Archaea</taxon>
        <taxon>Thermoproteota</taxon>
        <taxon>Thermoprotei</taxon>
        <taxon>Sulfolobales</taxon>
        <taxon>Sulfolobaceae</taxon>
        <taxon>Saccharolobus</taxon>
    </lineage>
</organism>
<keyword id="KW-0067">ATP-binding</keyword>
<keyword id="KW-0963">Cytoplasm</keyword>
<keyword id="KW-0547">Nucleotide-binding</keyword>
<keyword id="KW-0694">RNA-binding</keyword>
<keyword id="KW-0784">Thiamine biosynthesis</keyword>
<keyword id="KW-0808">Transferase</keyword>
<keyword id="KW-0820">tRNA-binding</keyword>
<reference key="1">
    <citation type="journal article" date="2009" name="Proc. Natl. Acad. Sci. U.S.A.">
        <title>Biogeography of the Sulfolobus islandicus pan-genome.</title>
        <authorList>
            <person name="Reno M.L."/>
            <person name="Held N.L."/>
            <person name="Fields C.J."/>
            <person name="Burke P.V."/>
            <person name="Whitaker R.J."/>
        </authorList>
    </citation>
    <scope>NUCLEOTIDE SEQUENCE [LARGE SCALE GENOMIC DNA]</scope>
    <source>
        <strain>Y.N.15.51 / Yellowstone #2</strain>
    </source>
</reference>
<protein>
    <recommendedName>
        <fullName evidence="1">Probable tRNA sulfurtransferase</fullName>
        <ecNumber evidence="1">2.8.1.4</ecNumber>
    </recommendedName>
    <alternativeName>
        <fullName evidence="1">Sulfur carrier protein ThiS sulfurtransferase</fullName>
    </alternativeName>
    <alternativeName>
        <fullName evidence="1">Thiamine biosynthesis protein ThiI</fullName>
    </alternativeName>
    <alternativeName>
        <fullName evidence="1">tRNA 4-thiouridine synthase</fullName>
    </alternativeName>
</protein>
<gene>
    <name evidence="1" type="primary">thiI</name>
    <name type="ordered locus">YN1551_1039</name>
</gene>
<evidence type="ECO:0000255" key="1">
    <source>
        <dbReference type="HAMAP-Rule" id="MF_00021"/>
    </source>
</evidence>
<comment type="function">
    <text evidence="1">Catalyzes the ATP-dependent transfer of a sulfur to tRNA to produce 4-thiouridine in position 8 of tRNAs, which functions as a near-UV photosensor. Also catalyzes the transfer of sulfur to the sulfur carrier protein ThiS, forming ThiS-thiocarboxylate. This is a step in the synthesis of thiazole, in the thiamine biosynthesis pathway. The sulfur is donated as persulfide by IscS.</text>
</comment>
<comment type="catalytic activity">
    <reaction evidence="1">
        <text>[ThiI sulfur-carrier protein]-S-sulfanyl-L-cysteine + a uridine in tRNA + 2 reduced [2Fe-2S]-[ferredoxin] + ATP + H(+) = [ThiI sulfur-carrier protein]-L-cysteine + a 4-thiouridine in tRNA + 2 oxidized [2Fe-2S]-[ferredoxin] + AMP + diphosphate</text>
        <dbReference type="Rhea" id="RHEA:24176"/>
        <dbReference type="Rhea" id="RHEA-COMP:10000"/>
        <dbReference type="Rhea" id="RHEA-COMP:10001"/>
        <dbReference type="Rhea" id="RHEA-COMP:13337"/>
        <dbReference type="Rhea" id="RHEA-COMP:13338"/>
        <dbReference type="Rhea" id="RHEA-COMP:13339"/>
        <dbReference type="Rhea" id="RHEA-COMP:13340"/>
        <dbReference type="ChEBI" id="CHEBI:15378"/>
        <dbReference type="ChEBI" id="CHEBI:29950"/>
        <dbReference type="ChEBI" id="CHEBI:30616"/>
        <dbReference type="ChEBI" id="CHEBI:33019"/>
        <dbReference type="ChEBI" id="CHEBI:33737"/>
        <dbReference type="ChEBI" id="CHEBI:33738"/>
        <dbReference type="ChEBI" id="CHEBI:61963"/>
        <dbReference type="ChEBI" id="CHEBI:65315"/>
        <dbReference type="ChEBI" id="CHEBI:136798"/>
        <dbReference type="ChEBI" id="CHEBI:456215"/>
        <dbReference type="EC" id="2.8.1.4"/>
    </reaction>
</comment>
<comment type="catalytic activity">
    <reaction evidence="1">
        <text>[ThiS sulfur-carrier protein]-C-terminal Gly-Gly-AMP + S-sulfanyl-L-cysteinyl-[cysteine desulfurase] + AH2 = [ThiS sulfur-carrier protein]-C-terminal-Gly-aminoethanethioate + L-cysteinyl-[cysteine desulfurase] + A + AMP + 2 H(+)</text>
        <dbReference type="Rhea" id="RHEA:43340"/>
        <dbReference type="Rhea" id="RHEA-COMP:12157"/>
        <dbReference type="Rhea" id="RHEA-COMP:12158"/>
        <dbReference type="Rhea" id="RHEA-COMP:12910"/>
        <dbReference type="Rhea" id="RHEA-COMP:19908"/>
        <dbReference type="ChEBI" id="CHEBI:13193"/>
        <dbReference type="ChEBI" id="CHEBI:15378"/>
        <dbReference type="ChEBI" id="CHEBI:17499"/>
        <dbReference type="ChEBI" id="CHEBI:29950"/>
        <dbReference type="ChEBI" id="CHEBI:61963"/>
        <dbReference type="ChEBI" id="CHEBI:90618"/>
        <dbReference type="ChEBI" id="CHEBI:232372"/>
        <dbReference type="ChEBI" id="CHEBI:456215"/>
    </reaction>
</comment>
<comment type="pathway">
    <text evidence="1">Cofactor biosynthesis; thiamine diphosphate biosynthesis.</text>
</comment>
<comment type="subcellular location">
    <subcellularLocation>
        <location evidence="1">Cytoplasm</location>
    </subcellularLocation>
</comment>
<comment type="similarity">
    <text evidence="1">Belongs to the ThiI family.</text>
</comment>